<reference key="1">
    <citation type="journal article" date="2009" name="J. Bacteriol.">
        <title>The genome of Burkholderia cenocepacia J2315, an epidemic pathogen of cystic fibrosis patients.</title>
        <authorList>
            <person name="Holden M.T."/>
            <person name="Seth-Smith H.M."/>
            <person name="Crossman L.C."/>
            <person name="Sebaihia M."/>
            <person name="Bentley S.D."/>
            <person name="Cerdeno-Tarraga A.M."/>
            <person name="Thomson N.R."/>
            <person name="Bason N."/>
            <person name="Quail M.A."/>
            <person name="Sharp S."/>
            <person name="Cherevach I."/>
            <person name="Churcher C."/>
            <person name="Goodhead I."/>
            <person name="Hauser H."/>
            <person name="Holroyd N."/>
            <person name="Mungall K."/>
            <person name="Scott P."/>
            <person name="Walker D."/>
            <person name="White B."/>
            <person name="Rose H."/>
            <person name="Iversen P."/>
            <person name="Mil-Homens D."/>
            <person name="Rocha E.P."/>
            <person name="Fialho A.M."/>
            <person name="Baldwin A."/>
            <person name="Dowson C."/>
            <person name="Barrell B.G."/>
            <person name="Govan J.R."/>
            <person name="Vandamme P."/>
            <person name="Hart C.A."/>
            <person name="Mahenthiralingam E."/>
            <person name="Parkhill J."/>
        </authorList>
    </citation>
    <scope>NUCLEOTIDE SEQUENCE [LARGE SCALE GENOMIC DNA]</scope>
    <source>
        <strain>ATCC BAA-245 / DSM 16553 / LMG 16656 / NCTC 13227 / J2315 / CF5610</strain>
    </source>
</reference>
<protein>
    <recommendedName>
        <fullName evidence="1">RNA-binding protein Hfq</fullName>
    </recommendedName>
</protein>
<name>HFQ_BURCJ</name>
<sequence>MSNKGQLLQDPFLNALRKEHVPVSIYLVNGIKLQGNIESFDQYVVLLRNTVTQMVYKHAISTVVPARPVNFHPDAEASS</sequence>
<accession>B4EAW4</accession>
<evidence type="ECO:0000255" key="1">
    <source>
        <dbReference type="HAMAP-Rule" id="MF_00436"/>
    </source>
</evidence>
<evidence type="ECO:0000255" key="2">
    <source>
        <dbReference type="PROSITE-ProRule" id="PRU01346"/>
    </source>
</evidence>
<dbReference type="EMBL" id="AM747720">
    <property type="protein sequence ID" value="CAR52179.1"/>
    <property type="molecule type" value="Genomic_DNA"/>
</dbReference>
<dbReference type="RefSeq" id="WP_006399927.1">
    <property type="nucleotide sequence ID" value="NC_011000.1"/>
</dbReference>
<dbReference type="SMR" id="B4EAW4"/>
<dbReference type="GeneID" id="98105673"/>
<dbReference type="KEGG" id="bcj:BCAL1879"/>
<dbReference type="eggNOG" id="COG1923">
    <property type="taxonomic scope" value="Bacteria"/>
</dbReference>
<dbReference type="HOGENOM" id="CLU_113688_2_2_4"/>
<dbReference type="BioCyc" id="BCEN216591:G1G1V-2070-MONOMER"/>
<dbReference type="Proteomes" id="UP000001035">
    <property type="component" value="Chromosome 1"/>
</dbReference>
<dbReference type="GO" id="GO:0005829">
    <property type="term" value="C:cytosol"/>
    <property type="evidence" value="ECO:0007669"/>
    <property type="project" value="TreeGrafter"/>
</dbReference>
<dbReference type="GO" id="GO:0003723">
    <property type="term" value="F:RNA binding"/>
    <property type="evidence" value="ECO:0007669"/>
    <property type="project" value="UniProtKB-UniRule"/>
</dbReference>
<dbReference type="GO" id="GO:0006355">
    <property type="term" value="P:regulation of DNA-templated transcription"/>
    <property type="evidence" value="ECO:0007669"/>
    <property type="project" value="InterPro"/>
</dbReference>
<dbReference type="GO" id="GO:0043487">
    <property type="term" value="P:regulation of RNA stability"/>
    <property type="evidence" value="ECO:0007669"/>
    <property type="project" value="TreeGrafter"/>
</dbReference>
<dbReference type="GO" id="GO:0045974">
    <property type="term" value="P:regulation of translation, ncRNA-mediated"/>
    <property type="evidence" value="ECO:0007669"/>
    <property type="project" value="TreeGrafter"/>
</dbReference>
<dbReference type="CDD" id="cd01716">
    <property type="entry name" value="Hfq"/>
    <property type="match status" value="1"/>
</dbReference>
<dbReference type="FunFam" id="2.30.30.100:FF:000001">
    <property type="entry name" value="RNA-binding protein Hfq"/>
    <property type="match status" value="1"/>
</dbReference>
<dbReference type="Gene3D" id="2.30.30.100">
    <property type="match status" value="1"/>
</dbReference>
<dbReference type="HAMAP" id="MF_00436">
    <property type="entry name" value="Hfq"/>
    <property type="match status" value="1"/>
</dbReference>
<dbReference type="InterPro" id="IPR005001">
    <property type="entry name" value="Hfq"/>
</dbReference>
<dbReference type="InterPro" id="IPR010920">
    <property type="entry name" value="LSM_dom_sf"/>
</dbReference>
<dbReference type="InterPro" id="IPR047575">
    <property type="entry name" value="Sm"/>
</dbReference>
<dbReference type="NCBIfam" id="TIGR02383">
    <property type="entry name" value="Hfq"/>
    <property type="match status" value="1"/>
</dbReference>
<dbReference type="NCBIfam" id="NF001602">
    <property type="entry name" value="PRK00395.1"/>
    <property type="match status" value="1"/>
</dbReference>
<dbReference type="PANTHER" id="PTHR34772">
    <property type="entry name" value="RNA-BINDING PROTEIN HFQ"/>
    <property type="match status" value="1"/>
</dbReference>
<dbReference type="PANTHER" id="PTHR34772:SF1">
    <property type="entry name" value="RNA-BINDING PROTEIN HFQ"/>
    <property type="match status" value="1"/>
</dbReference>
<dbReference type="Pfam" id="PF17209">
    <property type="entry name" value="Hfq"/>
    <property type="match status" value="1"/>
</dbReference>
<dbReference type="SUPFAM" id="SSF50182">
    <property type="entry name" value="Sm-like ribonucleoproteins"/>
    <property type="match status" value="1"/>
</dbReference>
<dbReference type="PROSITE" id="PS52002">
    <property type="entry name" value="SM"/>
    <property type="match status" value="1"/>
</dbReference>
<proteinExistence type="inferred from homology"/>
<organism>
    <name type="scientific">Burkholderia cenocepacia (strain ATCC BAA-245 / DSM 16553 / LMG 16656 / NCTC 13227 / J2315 / CF5610)</name>
    <name type="common">Burkholderia cepacia (strain J2315)</name>
    <dbReference type="NCBI Taxonomy" id="216591"/>
    <lineage>
        <taxon>Bacteria</taxon>
        <taxon>Pseudomonadati</taxon>
        <taxon>Pseudomonadota</taxon>
        <taxon>Betaproteobacteria</taxon>
        <taxon>Burkholderiales</taxon>
        <taxon>Burkholderiaceae</taxon>
        <taxon>Burkholderia</taxon>
        <taxon>Burkholderia cepacia complex</taxon>
    </lineage>
</organism>
<keyword id="KW-0694">RNA-binding</keyword>
<keyword id="KW-0346">Stress response</keyword>
<gene>
    <name evidence="1" type="primary">hfq</name>
    <name type="ordered locus">BceJ2315_18420</name>
    <name type="ORF">BCAL1879</name>
</gene>
<comment type="function">
    <text evidence="1">RNA chaperone that binds small regulatory RNA (sRNAs) and mRNAs to facilitate mRNA translational regulation in response to envelope stress, environmental stress and changes in metabolite concentrations. Also binds with high specificity to tRNAs.</text>
</comment>
<comment type="subunit">
    <text evidence="1">Homohexamer.</text>
</comment>
<comment type="similarity">
    <text evidence="1">Belongs to the Hfq family.</text>
</comment>
<feature type="chain" id="PRO_1000190312" description="RNA-binding protein Hfq">
    <location>
        <begin position="1"/>
        <end position="79"/>
    </location>
</feature>
<feature type="domain" description="Sm" evidence="2">
    <location>
        <begin position="10"/>
        <end position="69"/>
    </location>
</feature>